<keyword id="KW-0030">Aminoacyl-tRNA synthetase</keyword>
<keyword id="KW-0067">ATP-binding</keyword>
<keyword id="KW-0963">Cytoplasm</keyword>
<keyword id="KW-0436">Ligase</keyword>
<keyword id="KW-0479">Metal-binding</keyword>
<keyword id="KW-0547">Nucleotide-binding</keyword>
<keyword id="KW-0648">Protein biosynthesis</keyword>
<keyword id="KW-0862">Zinc</keyword>
<proteinExistence type="inferred from homology"/>
<dbReference type="EC" id="6.1.1.5" evidence="1"/>
<dbReference type="EMBL" id="CP000412">
    <property type="protein sequence ID" value="ABJ58307.1"/>
    <property type="molecule type" value="Genomic_DNA"/>
</dbReference>
<dbReference type="RefSeq" id="WP_003623535.1">
    <property type="nucleotide sequence ID" value="NC_008529.1"/>
</dbReference>
<dbReference type="SMR" id="Q04B65"/>
<dbReference type="KEGG" id="lbu:LBUL_0681"/>
<dbReference type="HOGENOM" id="CLU_001493_7_1_9"/>
<dbReference type="BioCyc" id="LDEL321956:LBUL_RS03250-MONOMER"/>
<dbReference type="GO" id="GO:0005829">
    <property type="term" value="C:cytosol"/>
    <property type="evidence" value="ECO:0007669"/>
    <property type="project" value="TreeGrafter"/>
</dbReference>
<dbReference type="GO" id="GO:0002161">
    <property type="term" value="F:aminoacyl-tRNA deacylase activity"/>
    <property type="evidence" value="ECO:0007669"/>
    <property type="project" value="InterPro"/>
</dbReference>
<dbReference type="GO" id="GO:0005524">
    <property type="term" value="F:ATP binding"/>
    <property type="evidence" value="ECO:0007669"/>
    <property type="project" value="UniProtKB-UniRule"/>
</dbReference>
<dbReference type="GO" id="GO:0004822">
    <property type="term" value="F:isoleucine-tRNA ligase activity"/>
    <property type="evidence" value="ECO:0007669"/>
    <property type="project" value="UniProtKB-UniRule"/>
</dbReference>
<dbReference type="GO" id="GO:0000049">
    <property type="term" value="F:tRNA binding"/>
    <property type="evidence" value="ECO:0007669"/>
    <property type="project" value="InterPro"/>
</dbReference>
<dbReference type="GO" id="GO:0008270">
    <property type="term" value="F:zinc ion binding"/>
    <property type="evidence" value="ECO:0007669"/>
    <property type="project" value="UniProtKB-UniRule"/>
</dbReference>
<dbReference type="GO" id="GO:0006428">
    <property type="term" value="P:isoleucyl-tRNA aminoacylation"/>
    <property type="evidence" value="ECO:0007669"/>
    <property type="project" value="UniProtKB-UniRule"/>
</dbReference>
<dbReference type="CDD" id="cd07960">
    <property type="entry name" value="Anticodon_Ia_Ile_BEm"/>
    <property type="match status" value="1"/>
</dbReference>
<dbReference type="CDD" id="cd00818">
    <property type="entry name" value="IleRS_core"/>
    <property type="match status" value="1"/>
</dbReference>
<dbReference type="FunFam" id="1.10.730.20:FF:000001">
    <property type="entry name" value="Isoleucine--tRNA ligase"/>
    <property type="match status" value="1"/>
</dbReference>
<dbReference type="FunFam" id="3.40.50.620:FF:000152">
    <property type="entry name" value="Isoleucine--tRNA ligase"/>
    <property type="match status" value="1"/>
</dbReference>
<dbReference type="Gene3D" id="1.10.730.20">
    <property type="match status" value="1"/>
</dbReference>
<dbReference type="Gene3D" id="3.40.50.620">
    <property type="entry name" value="HUPs"/>
    <property type="match status" value="2"/>
</dbReference>
<dbReference type="Gene3D" id="1.10.10.830">
    <property type="entry name" value="Ile-tRNA synthetase CP2 domain-like"/>
    <property type="match status" value="1"/>
</dbReference>
<dbReference type="Gene3D" id="3.90.740.10">
    <property type="entry name" value="Valyl/Leucyl/Isoleucyl-tRNA synthetase, editing domain"/>
    <property type="match status" value="1"/>
</dbReference>
<dbReference type="HAMAP" id="MF_02002">
    <property type="entry name" value="Ile_tRNA_synth_type1"/>
    <property type="match status" value="1"/>
</dbReference>
<dbReference type="InterPro" id="IPR001412">
    <property type="entry name" value="aa-tRNA-synth_I_CS"/>
</dbReference>
<dbReference type="InterPro" id="IPR002300">
    <property type="entry name" value="aa-tRNA-synth_Ia"/>
</dbReference>
<dbReference type="InterPro" id="IPR033708">
    <property type="entry name" value="Anticodon_Ile_BEm"/>
</dbReference>
<dbReference type="InterPro" id="IPR002301">
    <property type="entry name" value="Ile-tRNA-ligase"/>
</dbReference>
<dbReference type="InterPro" id="IPR023585">
    <property type="entry name" value="Ile-tRNA-ligase_type1"/>
</dbReference>
<dbReference type="InterPro" id="IPR050081">
    <property type="entry name" value="Ile-tRNA_ligase"/>
</dbReference>
<dbReference type="InterPro" id="IPR013155">
    <property type="entry name" value="M/V/L/I-tRNA-synth_anticd-bd"/>
</dbReference>
<dbReference type="InterPro" id="IPR014729">
    <property type="entry name" value="Rossmann-like_a/b/a_fold"/>
</dbReference>
<dbReference type="InterPro" id="IPR009080">
    <property type="entry name" value="tRNAsynth_Ia_anticodon-bd"/>
</dbReference>
<dbReference type="InterPro" id="IPR009008">
    <property type="entry name" value="Val/Leu/Ile-tRNA-synth_edit"/>
</dbReference>
<dbReference type="InterPro" id="IPR010663">
    <property type="entry name" value="Znf_FPG/IleRS"/>
</dbReference>
<dbReference type="NCBIfam" id="TIGR00392">
    <property type="entry name" value="ileS"/>
    <property type="match status" value="1"/>
</dbReference>
<dbReference type="PANTHER" id="PTHR42765:SF1">
    <property type="entry name" value="ISOLEUCINE--TRNA LIGASE, MITOCHONDRIAL"/>
    <property type="match status" value="1"/>
</dbReference>
<dbReference type="PANTHER" id="PTHR42765">
    <property type="entry name" value="SOLEUCYL-TRNA SYNTHETASE"/>
    <property type="match status" value="1"/>
</dbReference>
<dbReference type="Pfam" id="PF08264">
    <property type="entry name" value="Anticodon_1"/>
    <property type="match status" value="1"/>
</dbReference>
<dbReference type="Pfam" id="PF00133">
    <property type="entry name" value="tRNA-synt_1"/>
    <property type="match status" value="1"/>
</dbReference>
<dbReference type="Pfam" id="PF06827">
    <property type="entry name" value="zf-FPG_IleRS"/>
    <property type="match status" value="1"/>
</dbReference>
<dbReference type="PRINTS" id="PR00984">
    <property type="entry name" value="TRNASYNTHILE"/>
</dbReference>
<dbReference type="SUPFAM" id="SSF47323">
    <property type="entry name" value="Anticodon-binding domain of a subclass of class I aminoacyl-tRNA synthetases"/>
    <property type="match status" value="1"/>
</dbReference>
<dbReference type="SUPFAM" id="SSF52374">
    <property type="entry name" value="Nucleotidylyl transferase"/>
    <property type="match status" value="1"/>
</dbReference>
<dbReference type="SUPFAM" id="SSF50677">
    <property type="entry name" value="ValRS/IleRS/LeuRS editing domain"/>
    <property type="match status" value="1"/>
</dbReference>
<dbReference type="PROSITE" id="PS00178">
    <property type="entry name" value="AA_TRNA_LIGASE_I"/>
    <property type="match status" value="1"/>
</dbReference>
<protein>
    <recommendedName>
        <fullName evidence="1">Isoleucine--tRNA ligase</fullName>
        <ecNumber evidence="1">6.1.1.5</ecNumber>
    </recommendedName>
    <alternativeName>
        <fullName evidence="1">Isoleucyl-tRNA synthetase</fullName>
        <shortName evidence="1">IleRS</shortName>
    </alternativeName>
</protein>
<organism>
    <name type="scientific">Lactobacillus delbrueckii subsp. bulgaricus (strain ATCC BAA-365 / Lb-18)</name>
    <dbReference type="NCBI Taxonomy" id="321956"/>
    <lineage>
        <taxon>Bacteria</taxon>
        <taxon>Bacillati</taxon>
        <taxon>Bacillota</taxon>
        <taxon>Bacilli</taxon>
        <taxon>Lactobacillales</taxon>
        <taxon>Lactobacillaceae</taxon>
        <taxon>Lactobacillus</taxon>
    </lineage>
</organism>
<gene>
    <name evidence="1" type="primary">ileS</name>
    <name type="ordered locus">LBUL_0681</name>
</gene>
<name>SYI_LACDB</name>
<comment type="function">
    <text evidence="1">Catalyzes the attachment of isoleucine to tRNA(Ile). As IleRS can inadvertently accommodate and process structurally similar amino acids such as valine, to avoid such errors it has two additional distinct tRNA(Ile)-dependent editing activities. One activity is designated as 'pretransfer' editing and involves the hydrolysis of activated Val-AMP. The other activity is designated 'posttransfer' editing and involves deacylation of mischarged Val-tRNA(Ile).</text>
</comment>
<comment type="catalytic activity">
    <reaction evidence="1">
        <text>tRNA(Ile) + L-isoleucine + ATP = L-isoleucyl-tRNA(Ile) + AMP + diphosphate</text>
        <dbReference type="Rhea" id="RHEA:11060"/>
        <dbReference type="Rhea" id="RHEA-COMP:9666"/>
        <dbReference type="Rhea" id="RHEA-COMP:9695"/>
        <dbReference type="ChEBI" id="CHEBI:30616"/>
        <dbReference type="ChEBI" id="CHEBI:33019"/>
        <dbReference type="ChEBI" id="CHEBI:58045"/>
        <dbReference type="ChEBI" id="CHEBI:78442"/>
        <dbReference type="ChEBI" id="CHEBI:78528"/>
        <dbReference type="ChEBI" id="CHEBI:456215"/>
        <dbReference type="EC" id="6.1.1.5"/>
    </reaction>
</comment>
<comment type="cofactor">
    <cofactor evidence="1">
        <name>Zn(2+)</name>
        <dbReference type="ChEBI" id="CHEBI:29105"/>
    </cofactor>
    <text evidence="1">Binds 1 zinc ion per subunit.</text>
</comment>
<comment type="subunit">
    <text evidence="1">Monomer.</text>
</comment>
<comment type="subcellular location">
    <subcellularLocation>
        <location evidence="1">Cytoplasm</location>
    </subcellularLocation>
</comment>
<comment type="domain">
    <text evidence="1">IleRS has two distinct active sites: one for aminoacylation and one for editing. The misactivated valine is translocated from the active site to the editing site, which sterically excludes the correctly activated isoleucine. The single editing site contains two valyl binding pockets, one specific for each substrate (Val-AMP or Val-tRNA(Ile)).</text>
</comment>
<comment type="similarity">
    <text evidence="1">Belongs to the class-I aminoacyl-tRNA synthetase family. IleS type 1 subfamily.</text>
</comment>
<reference key="1">
    <citation type="journal article" date="2006" name="Proc. Natl. Acad. Sci. U.S.A.">
        <title>Comparative genomics of the lactic acid bacteria.</title>
        <authorList>
            <person name="Makarova K.S."/>
            <person name="Slesarev A."/>
            <person name="Wolf Y.I."/>
            <person name="Sorokin A."/>
            <person name="Mirkin B."/>
            <person name="Koonin E.V."/>
            <person name="Pavlov A."/>
            <person name="Pavlova N."/>
            <person name="Karamychev V."/>
            <person name="Polouchine N."/>
            <person name="Shakhova V."/>
            <person name="Grigoriev I."/>
            <person name="Lou Y."/>
            <person name="Rohksar D."/>
            <person name="Lucas S."/>
            <person name="Huang K."/>
            <person name="Goodstein D.M."/>
            <person name="Hawkins T."/>
            <person name="Plengvidhya V."/>
            <person name="Welker D."/>
            <person name="Hughes J."/>
            <person name="Goh Y."/>
            <person name="Benson A."/>
            <person name="Baldwin K."/>
            <person name="Lee J.-H."/>
            <person name="Diaz-Muniz I."/>
            <person name="Dosti B."/>
            <person name="Smeianov V."/>
            <person name="Wechter W."/>
            <person name="Barabote R."/>
            <person name="Lorca G."/>
            <person name="Altermann E."/>
            <person name="Barrangou R."/>
            <person name="Ganesan B."/>
            <person name="Xie Y."/>
            <person name="Rawsthorne H."/>
            <person name="Tamir D."/>
            <person name="Parker C."/>
            <person name="Breidt F."/>
            <person name="Broadbent J.R."/>
            <person name="Hutkins R."/>
            <person name="O'Sullivan D."/>
            <person name="Steele J."/>
            <person name="Unlu G."/>
            <person name="Saier M.H. Jr."/>
            <person name="Klaenhammer T."/>
            <person name="Richardson P."/>
            <person name="Kozyavkin S."/>
            <person name="Weimer B.C."/>
            <person name="Mills D.A."/>
        </authorList>
    </citation>
    <scope>NUCLEOTIDE SEQUENCE [LARGE SCALE GENOMIC DNA]</scope>
    <source>
        <strain>ATCC BAA-365 / Lb-18</strain>
    </source>
</reference>
<sequence length="931" mass="106004">MRVKDTLNLGKTKFPMRGNLPKREAEWEKNWEDQKFYERRLKLNEGHERFDLHDGPPFANGNIHMGHALNKITKDIIVRSKNMEGYYAPYVPGWDTHGLPIEQQLTKQGVDRKTMDRAAYRELCRKFAMEQVEKQRTDFKRLGVMGDWDHPYITLLPEFEAAEIRVFGKMYENGYIYQGKKPVYWSWSSESTLAEAEVEYHDVESPSIYISFPVKDGKGKLSEENTYFLIWTTTPWTIPSNQGIAVNPKFDYSVVEVGDRRYVVGTDRLSAVAEILGWDSYKTVQHLKGTDMEYMVAKHPYIEGRDSLLMEAVYVTDDDGTGLVHTASGFGEDDYNTAMRYGFDVLSPMDNKGCFTEEIPDPDLVGKFYTDTNEIVKDKLSAAGNLLHYSTFVHSAAHDWRTKKPVVYRATTQWFASISKFRDQILDQIEKTTFYPAWGKTRLYNMIKDRGDWVISRQRAWGVPLPIFYAEDGTAIVTHETIEHVADLFAKEGSNAWFTHPVEELLPEGFTSEHSPNGKFTKETDILDVWFDSGSSWSGVQALGRAVHYPTSMYLEGSDQYRGWFNSSLITSVATNGVAPYKSVLSQGFTLDGQGRKMSKSLGNTIAPNDVIKQMGAEIIRLWVASVDASGDVGVSMDILRQVSEGYRKIRNTFRYMLANTADFDPEKDRVAYKDLRKIDQYLEVKLNDLVAESIVNYDKYDFADVYKLVFKFITNDLSAFYLDFAKDVLYIEGKDSHARRSMQTVIYDAAVKLAKILAPILPHTMGEVWGYLKEKEEDVYLSNFPEIEDYADADDLKESWGEFMKLRDDVLKALEEARDQKLIGKSFEASVTVYPGEAAKAALDKLAGEDFREILIVSNLVMGQGEVPAEAKQFDQASVLVRRAEGEVCPRCRMYRTDLGADSRLPQLCGRCASIVAGDHPEILEEGLED</sequence>
<evidence type="ECO:0000255" key="1">
    <source>
        <dbReference type="HAMAP-Rule" id="MF_02002"/>
    </source>
</evidence>
<feature type="chain" id="PRO_1000022084" description="Isoleucine--tRNA ligase">
    <location>
        <begin position="1"/>
        <end position="931"/>
    </location>
</feature>
<feature type="short sequence motif" description="'HIGH' region">
    <location>
        <begin position="57"/>
        <end position="67"/>
    </location>
</feature>
<feature type="short sequence motif" description="'KMSKS' region">
    <location>
        <begin position="597"/>
        <end position="601"/>
    </location>
</feature>
<feature type="binding site" evidence="1">
    <location>
        <position position="556"/>
    </location>
    <ligand>
        <name>L-isoleucyl-5'-AMP</name>
        <dbReference type="ChEBI" id="CHEBI:178002"/>
    </ligand>
</feature>
<feature type="binding site" evidence="1">
    <location>
        <position position="600"/>
    </location>
    <ligand>
        <name>ATP</name>
        <dbReference type="ChEBI" id="CHEBI:30616"/>
    </ligand>
</feature>
<feature type="binding site" evidence="1">
    <location>
        <position position="890"/>
    </location>
    <ligand>
        <name>Zn(2+)</name>
        <dbReference type="ChEBI" id="CHEBI:29105"/>
    </ligand>
</feature>
<feature type="binding site" evidence="1">
    <location>
        <position position="893"/>
    </location>
    <ligand>
        <name>Zn(2+)</name>
        <dbReference type="ChEBI" id="CHEBI:29105"/>
    </ligand>
</feature>
<feature type="binding site" evidence="1">
    <location>
        <position position="910"/>
    </location>
    <ligand>
        <name>Zn(2+)</name>
        <dbReference type="ChEBI" id="CHEBI:29105"/>
    </ligand>
</feature>
<feature type="binding site" evidence="1">
    <location>
        <position position="913"/>
    </location>
    <ligand>
        <name>Zn(2+)</name>
        <dbReference type="ChEBI" id="CHEBI:29105"/>
    </ligand>
</feature>
<accession>Q04B65</accession>